<feature type="chain" id="PRO_0000388143" description="Ubiquinone biosynthesis protein COQ4, mitochondrial">
    <location>
        <begin position="1"/>
        <end position="262"/>
    </location>
</feature>
<feature type="region of interest" description="Disordered" evidence="2">
    <location>
        <begin position="243"/>
        <end position="262"/>
    </location>
</feature>
<feature type="compositionally biased region" description="Basic and acidic residues" evidence="2">
    <location>
        <begin position="252"/>
        <end position="262"/>
    </location>
</feature>
<feature type="binding site" evidence="1">
    <location>
        <position position="154"/>
    </location>
    <ligand>
        <name>Zn(2+)</name>
        <dbReference type="ChEBI" id="CHEBI:29105"/>
    </ligand>
</feature>
<feature type="binding site" evidence="1">
    <location>
        <position position="155"/>
    </location>
    <ligand>
        <name>Zn(2+)</name>
        <dbReference type="ChEBI" id="CHEBI:29105"/>
    </ligand>
</feature>
<feature type="binding site" evidence="1">
    <location>
        <position position="158"/>
    </location>
    <ligand>
        <name>Zn(2+)</name>
        <dbReference type="ChEBI" id="CHEBI:29105"/>
    </ligand>
</feature>
<feature type="binding site" evidence="1">
    <location>
        <position position="170"/>
    </location>
    <ligand>
        <name>Zn(2+)</name>
        <dbReference type="ChEBI" id="CHEBI:29105"/>
    </ligand>
</feature>
<name>COQ4_YARLI</name>
<organism>
    <name type="scientific">Yarrowia lipolytica (strain CLIB 122 / E 150)</name>
    <name type="common">Yeast</name>
    <name type="synonym">Candida lipolytica</name>
    <dbReference type="NCBI Taxonomy" id="284591"/>
    <lineage>
        <taxon>Eukaryota</taxon>
        <taxon>Fungi</taxon>
        <taxon>Dikarya</taxon>
        <taxon>Ascomycota</taxon>
        <taxon>Saccharomycotina</taxon>
        <taxon>Dipodascomycetes</taxon>
        <taxon>Dipodascales</taxon>
        <taxon>Dipodascales incertae sedis</taxon>
        <taxon>Yarrowia</taxon>
    </lineage>
</organism>
<proteinExistence type="inferred from homology"/>
<dbReference type="EC" id="4.1.1.130" evidence="1"/>
<dbReference type="EMBL" id="CR382132">
    <property type="protein sequence ID" value="CAG78750.1"/>
    <property type="molecule type" value="Genomic_DNA"/>
</dbReference>
<dbReference type="RefSeq" id="XP_505938.1">
    <property type="nucleotide sequence ID" value="XM_505938.1"/>
</dbReference>
<dbReference type="SMR" id="Q6C074"/>
<dbReference type="FunCoup" id="Q6C074">
    <property type="interactions" value="546"/>
</dbReference>
<dbReference type="STRING" id="284591.Q6C074"/>
<dbReference type="EnsemblFungi" id="CAG78750">
    <property type="protein sequence ID" value="CAG78750"/>
    <property type="gene ID" value="YALI0_F27247g"/>
</dbReference>
<dbReference type="KEGG" id="yli:2907824"/>
<dbReference type="VEuPathDB" id="FungiDB:YALI0_F27247g"/>
<dbReference type="HOGENOM" id="CLU_061241_0_0_1"/>
<dbReference type="InParanoid" id="Q6C074"/>
<dbReference type="OMA" id="YYERHFH"/>
<dbReference type="OrthoDB" id="83888at4891"/>
<dbReference type="UniPathway" id="UPA00232"/>
<dbReference type="Proteomes" id="UP000001300">
    <property type="component" value="Chromosome F"/>
</dbReference>
<dbReference type="GO" id="GO:0031314">
    <property type="term" value="C:extrinsic component of mitochondrial inner membrane"/>
    <property type="evidence" value="ECO:0007669"/>
    <property type="project" value="UniProtKB-UniRule"/>
</dbReference>
<dbReference type="GO" id="GO:0005739">
    <property type="term" value="C:mitochondrion"/>
    <property type="evidence" value="ECO:0000318"/>
    <property type="project" value="GO_Central"/>
</dbReference>
<dbReference type="GO" id="GO:0006744">
    <property type="term" value="P:ubiquinone biosynthetic process"/>
    <property type="evidence" value="ECO:0007669"/>
    <property type="project" value="UniProtKB-UniRule"/>
</dbReference>
<dbReference type="HAMAP" id="MF_03111">
    <property type="entry name" value="Coq4"/>
    <property type="match status" value="1"/>
</dbReference>
<dbReference type="InterPro" id="IPR007715">
    <property type="entry name" value="Coq4"/>
</dbReference>
<dbReference type="InterPro" id="IPR027540">
    <property type="entry name" value="Coq4_euk"/>
</dbReference>
<dbReference type="PANTHER" id="PTHR12922">
    <property type="entry name" value="UBIQUINONE BIOSYNTHESIS PROTEIN"/>
    <property type="match status" value="1"/>
</dbReference>
<dbReference type="PANTHER" id="PTHR12922:SF7">
    <property type="entry name" value="UBIQUINONE BIOSYNTHESIS PROTEIN COQ4 HOMOLOG, MITOCHONDRIAL"/>
    <property type="match status" value="1"/>
</dbReference>
<dbReference type="Pfam" id="PF05019">
    <property type="entry name" value="Coq4"/>
    <property type="match status" value="1"/>
</dbReference>
<accession>Q6C074</accession>
<evidence type="ECO:0000255" key="1">
    <source>
        <dbReference type="HAMAP-Rule" id="MF_03111"/>
    </source>
</evidence>
<evidence type="ECO:0000256" key="2">
    <source>
        <dbReference type="SAM" id="MobiDB-lite"/>
    </source>
</evidence>
<comment type="function">
    <text evidence="1">Lyase that catalyzes the C1-decarboxylation of 4-hydroxy-3-methoxy-5-(all-trans-polyprenyl)benzoic acid into 2-methoxy-6-(all-trans-polyprenyl)phenol during ubiquinone biosynthesis.</text>
</comment>
<comment type="catalytic activity">
    <reaction evidence="1">
        <text>a 4-hydroxy-3-methoxy-5-(all-trans-polyprenyl)benzoate + H(+) = a 2-methoxy-6-(all-trans-polyprenyl)phenol + CO2</text>
        <dbReference type="Rhea" id="RHEA:81179"/>
        <dbReference type="Rhea" id="RHEA-COMP:9551"/>
        <dbReference type="Rhea" id="RHEA-COMP:10931"/>
        <dbReference type="ChEBI" id="CHEBI:15378"/>
        <dbReference type="ChEBI" id="CHEBI:16526"/>
        <dbReference type="ChEBI" id="CHEBI:62731"/>
        <dbReference type="ChEBI" id="CHEBI:84443"/>
        <dbReference type="EC" id="4.1.1.130"/>
    </reaction>
</comment>
<comment type="cofactor">
    <cofactor evidence="1">
        <name>Zn(2+)</name>
        <dbReference type="ChEBI" id="CHEBI:29105"/>
    </cofactor>
</comment>
<comment type="pathway">
    <text evidence="1">Cofactor biosynthesis; ubiquinone biosynthesis.</text>
</comment>
<comment type="subunit">
    <text evidence="1">Component of a multi-subunit COQ enzyme complex, composed of at least COQ3, COQ4, COQ5, COQ6, COQ7 and COQ9.</text>
</comment>
<comment type="subcellular location">
    <subcellularLocation>
        <location evidence="1">Mitochondrion inner membrane</location>
        <topology evidence="1">Peripheral membrane protein</topology>
        <orientation evidence="1">Matrix side</orientation>
    </subcellularLocation>
</comment>
<comment type="miscellaneous">
    <text evidence="1">This protein may be expected to contain an N-terminal transit peptide but none has been predicted.</text>
</comment>
<comment type="similarity">
    <text evidence="1">Belongs to the COQ4 family.</text>
</comment>
<sequence length="262" mass="30313">MFRTVPKTTLLAPIQRRTLLNGNYPKAYPEHVPLTCLGRAVLAVGSGFGTFFDSRRGDLVATLGEATAQPYFIYKLREQMLKDPTGRRLLREQPRMTSKSLDLDKLRNMKVGSIGRTYVEWLDKEGVSPDTRAQVRYIDDPECAYVMQRYRESHDFYHALTGLPIIMEGELALKAFEWANTGLPMSGLGMVLTPLKFKPKQRKRYFDVYLPWALYNGFRSKPVINVYWEEVLEKDAEELRRDLGIEQPPDLRQMKKDMAKKK</sequence>
<reference key="1">
    <citation type="journal article" date="2004" name="Nature">
        <title>Genome evolution in yeasts.</title>
        <authorList>
            <person name="Dujon B."/>
            <person name="Sherman D."/>
            <person name="Fischer G."/>
            <person name="Durrens P."/>
            <person name="Casaregola S."/>
            <person name="Lafontaine I."/>
            <person name="de Montigny J."/>
            <person name="Marck C."/>
            <person name="Neuveglise C."/>
            <person name="Talla E."/>
            <person name="Goffard N."/>
            <person name="Frangeul L."/>
            <person name="Aigle M."/>
            <person name="Anthouard V."/>
            <person name="Babour A."/>
            <person name="Barbe V."/>
            <person name="Barnay S."/>
            <person name="Blanchin S."/>
            <person name="Beckerich J.-M."/>
            <person name="Beyne E."/>
            <person name="Bleykasten C."/>
            <person name="Boisrame A."/>
            <person name="Boyer J."/>
            <person name="Cattolico L."/>
            <person name="Confanioleri F."/>
            <person name="de Daruvar A."/>
            <person name="Despons L."/>
            <person name="Fabre E."/>
            <person name="Fairhead C."/>
            <person name="Ferry-Dumazet H."/>
            <person name="Groppi A."/>
            <person name="Hantraye F."/>
            <person name="Hennequin C."/>
            <person name="Jauniaux N."/>
            <person name="Joyet P."/>
            <person name="Kachouri R."/>
            <person name="Kerrest A."/>
            <person name="Koszul R."/>
            <person name="Lemaire M."/>
            <person name="Lesur I."/>
            <person name="Ma L."/>
            <person name="Muller H."/>
            <person name="Nicaud J.-M."/>
            <person name="Nikolski M."/>
            <person name="Oztas S."/>
            <person name="Ozier-Kalogeropoulos O."/>
            <person name="Pellenz S."/>
            <person name="Potier S."/>
            <person name="Richard G.-F."/>
            <person name="Straub M.-L."/>
            <person name="Suleau A."/>
            <person name="Swennen D."/>
            <person name="Tekaia F."/>
            <person name="Wesolowski-Louvel M."/>
            <person name="Westhof E."/>
            <person name="Wirth B."/>
            <person name="Zeniou-Meyer M."/>
            <person name="Zivanovic Y."/>
            <person name="Bolotin-Fukuhara M."/>
            <person name="Thierry A."/>
            <person name="Bouchier C."/>
            <person name="Caudron B."/>
            <person name="Scarpelli C."/>
            <person name="Gaillardin C."/>
            <person name="Weissenbach J."/>
            <person name="Wincker P."/>
            <person name="Souciet J.-L."/>
        </authorList>
    </citation>
    <scope>NUCLEOTIDE SEQUENCE [LARGE SCALE GENOMIC DNA]</scope>
    <source>
        <strain>CLIB 122 / E 150</strain>
    </source>
</reference>
<gene>
    <name evidence="1" type="primary">COQ4</name>
    <name type="ordered locus">YALI0F27247g</name>
</gene>
<protein>
    <recommendedName>
        <fullName evidence="1">Ubiquinone biosynthesis protein COQ4, mitochondrial</fullName>
    </recommendedName>
    <alternativeName>
        <fullName>4-hydroxy-3-methoxy-5-polyprenylbenzoate decarboxylase</fullName>
        <ecNumber evidence="1">4.1.1.130</ecNumber>
    </alternativeName>
    <alternativeName>
        <fullName evidence="1">Coenzyme Q biosynthesis protein 4</fullName>
    </alternativeName>
</protein>
<keyword id="KW-0456">Lyase</keyword>
<keyword id="KW-0472">Membrane</keyword>
<keyword id="KW-0479">Metal-binding</keyword>
<keyword id="KW-0496">Mitochondrion</keyword>
<keyword id="KW-0999">Mitochondrion inner membrane</keyword>
<keyword id="KW-1185">Reference proteome</keyword>
<keyword id="KW-0831">Ubiquinone biosynthesis</keyword>
<keyword id="KW-0862">Zinc</keyword>